<organism>
    <name type="scientific">Autographa californica nuclear polyhedrosis virus</name>
    <name type="common">AcMNPV</name>
    <dbReference type="NCBI Taxonomy" id="46015"/>
    <lineage>
        <taxon>Viruses</taxon>
        <taxon>Viruses incertae sedis</taxon>
        <taxon>Naldaviricetes</taxon>
        <taxon>Lefavirales</taxon>
        <taxon>Baculoviridae</taxon>
        <taxon>Alphabaculovirus</taxon>
        <taxon>Alphabaculovirus aucalifornicae</taxon>
    </lineage>
</organism>
<dbReference type="EMBL" id="L22858">
    <property type="protein sequence ID" value="AAA66736.1"/>
    <property type="molecule type" value="Genomic_DNA"/>
</dbReference>
<dbReference type="PIR" id="C72863">
    <property type="entry name" value="C72863"/>
</dbReference>
<dbReference type="RefSeq" id="NP_054136.1">
    <property type="nucleotide sequence ID" value="NC_001623.1"/>
</dbReference>
<dbReference type="SMR" id="P41659"/>
<dbReference type="GeneID" id="1403939"/>
<dbReference type="KEGG" id="vg:1403939"/>
<dbReference type="OrthoDB" id="8415at10239"/>
<dbReference type="Proteomes" id="UP000008292">
    <property type="component" value="Segment"/>
</dbReference>
<dbReference type="InterPro" id="IPR008534">
    <property type="entry name" value="DUF816"/>
</dbReference>
<dbReference type="Pfam" id="PF05674">
    <property type="entry name" value="DUF816"/>
    <property type="match status" value="1"/>
</dbReference>
<organismHost>
    <name type="scientific">Lepidoptera</name>
    <name type="common">butterflies and moths</name>
    <dbReference type="NCBI Taxonomy" id="7088"/>
</organismHost>
<sequence>MDDSIDYKDFNRRILLIVFKFALNKSTILSIVQRDHRVAIKRLNKINPDLKSSPRNASALQ</sequence>
<protein>
    <recommendedName>
        <fullName>Uncharacterized 7.1 kDa protein in HE65-PK2 intergenic region</fullName>
    </recommendedName>
</protein>
<proteinExistence type="predicted"/>
<name>Y106_NPVAC</name>
<keyword id="KW-1185">Reference proteome</keyword>
<accession>P41659</accession>
<reference key="1">
    <citation type="journal article" date="1994" name="Virology">
        <title>The complete DNA sequence of Autographa californica nuclear polyhedrosis virus.</title>
        <authorList>
            <person name="Ayres M.D."/>
            <person name="Howard S.C."/>
            <person name="Kuzio J."/>
            <person name="Lopez-Ferber M."/>
            <person name="Possee R.D."/>
        </authorList>
    </citation>
    <scope>NUCLEOTIDE SEQUENCE [LARGE SCALE GENOMIC DNA]</scope>
    <source>
        <strain>C6</strain>
    </source>
</reference>
<feature type="chain" id="PRO_0000133038" description="Uncharacterized 7.1 kDa protein in HE65-PK2 intergenic region">
    <location>
        <begin position="1"/>
        <end position="61"/>
    </location>
</feature>